<dbReference type="EMBL" id="CP000970">
    <property type="protein sequence ID" value="ACB17320.1"/>
    <property type="molecule type" value="Genomic_DNA"/>
</dbReference>
<dbReference type="RefSeq" id="WP_000098818.1">
    <property type="nucleotide sequence ID" value="NC_010498.1"/>
</dbReference>
<dbReference type="BMRB" id="B1LEG6"/>
<dbReference type="SMR" id="B1LEG6"/>
<dbReference type="GeneID" id="93777486"/>
<dbReference type="KEGG" id="ecm:EcSMS35_4907"/>
<dbReference type="HOGENOM" id="CLU_1501592_0_0_6"/>
<dbReference type="Proteomes" id="UP000007011">
    <property type="component" value="Chromosome"/>
</dbReference>
<dbReference type="GO" id="GO:1990077">
    <property type="term" value="C:primosome complex"/>
    <property type="evidence" value="ECO:0007669"/>
    <property type="project" value="UniProtKB-KW"/>
</dbReference>
<dbReference type="GO" id="GO:0006269">
    <property type="term" value="P:DNA replication, synthesis of primer"/>
    <property type="evidence" value="ECO:0007669"/>
    <property type="project" value="UniProtKB-UniRule"/>
</dbReference>
<dbReference type="FunFam" id="1.10.8.1180:FF:000001">
    <property type="entry name" value="Primosomal protein 1"/>
    <property type="match status" value="1"/>
</dbReference>
<dbReference type="Gene3D" id="1.10.8.1180">
    <property type="match status" value="1"/>
</dbReference>
<dbReference type="HAMAP" id="MF_01061">
    <property type="entry name" value="DnaT"/>
    <property type="match status" value="1"/>
</dbReference>
<dbReference type="InterPro" id="IPR020917">
    <property type="entry name" value="DnaT"/>
</dbReference>
<dbReference type="InterPro" id="IPR040480">
    <property type="entry name" value="DnaT_DNA_bind"/>
</dbReference>
<dbReference type="NCBIfam" id="NF002770">
    <property type="entry name" value="PRK02854.1"/>
    <property type="match status" value="1"/>
</dbReference>
<dbReference type="Pfam" id="PF17948">
    <property type="entry name" value="DnaT"/>
    <property type="match status" value="1"/>
</dbReference>
<feature type="chain" id="PRO_1000136436" description="Replication restart protein DnaT">
    <location>
        <begin position="1"/>
        <end position="179"/>
    </location>
</feature>
<feature type="region of interest" description="Disordered" evidence="2">
    <location>
        <begin position="156"/>
        <end position="179"/>
    </location>
</feature>
<protein>
    <recommendedName>
        <fullName evidence="1">Replication restart protein DnaT</fullName>
    </recommendedName>
</protein>
<evidence type="ECO:0000255" key="1">
    <source>
        <dbReference type="HAMAP-Rule" id="MF_01061"/>
    </source>
</evidence>
<evidence type="ECO:0000256" key="2">
    <source>
        <dbReference type="SAM" id="MobiDB-lite"/>
    </source>
</evidence>
<proteinExistence type="inferred from homology"/>
<organism>
    <name type="scientific">Escherichia coli (strain SMS-3-5 / SECEC)</name>
    <dbReference type="NCBI Taxonomy" id="439855"/>
    <lineage>
        <taxon>Bacteria</taxon>
        <taxon>Pseudomonadati</taxon>
        <taxon>Pseudomonadota</taxon>
        <taxon>Gammaproteobacteria</taxon>
        <taxon>Enterobacterales</taxon>
        <taxon>Enterobacteriaceae</taxon>
        <taxon>Escherichia</taxon>
    </lineage>
</organism>
<accession>B1LEG6</accession>
<reference key="1">
    <citation type="journal article" date="2008" name="J. Bacteriol.">
        <title>Insights into the environmental resistance gene pool from the genome sequence of the multidrug-resistant environmental isolate Escherichia coli SMS-3-5.</title>
        <authorList>
            <person name="Fricke W.F."/>
            <person name="Wright M.S."/>
            <person name="Lindell A.H."/>
            <person name="Harkins D.M."/>
            <person name="Baker-Austin C."/>
            <person name="Ravel J."/>
            <person name="Stepanauskas R."/>
        </authorList>
    </citation>
    <scope>NUCLEOTIDE SEQUENCE [LARGE SCALE GENOMIC DNA]</scope>
    <source>
        <strain>SMS-3-5 / SECEC</strain>
    </source>
</reference>
<comment type="function">
    <text evidence="1">Involved in the restart of stalled replication forks, which reloads the replicative helicase on sites other than the origin of replication. Can function in multiple replication restart pathways. Displaces ssDNA from a PriB-ssDNA complex. Probably forms a spiral filament on ssDNA.</text>
</comment>
<comment type="subunit">
    <text evidence="1">Homooligomerizes. Interacts with PriB. Component of the replication restart primosome. Primosome assembly occurs via a 'hand-off' mechanism. PriA binds to replication forks, subsequently PriB then DnaT bind; DnaT then displaces ssDNA to generate the helicase loading substrate.</text>
</comment>
<comment type="similarity">
    <text evidence="1">Belongs to the DnaT family.</text>
</comment>
<keyword id="KW-0235">DNA replication</keyword>
<keyword id="KW-0238">DNA-binding</keyword>
<keyword id="KW-0639">Primosome</keyword>
<name>DNAT_ECOSM</name>
<sequence>MSSRVLTPDVVGIDALVHDHQTVLAKAEGGVVAVFANNAPAFYAVTPARLAELLALEEKLARPGSDVALDDQLYQEPQAAPVAVPMGKFAMYPDWQPDADFIRLAALWGVALREPVTTEELASFIAYWQAEGKVFHHVQWQQKLARSLQIGRASNGGLPKRDVNTVSEPDSQIPPGFRG</sequence>
<gene>
    <name evidence="1" type="primary">dnaT</name>
    <name type="ordered locus">EcSMS35_4907</name>
</gene>